<accession>Q4P996</accession>
<accession>A0A0D1DYN3</accession>
<gene>
    <name type="primary">PRM1</name>
    <name type="ORF">UMAG_03317</name>
</gene>
<comment type="function">
    <text evidence="1">Involved in cell fusion during mating by stabilizing the plasma membrane fusion event.</text>
</comment>
<comment type="subcellular location">
    <subcellularLocation>
        <location evidence="1">Cell membrane</location>
        <topology evidence="1">Multi-pass membrane protein</topology>
    </subcellularLocation>
</comment>
<comment type="similarity">
    <text evidence="4">Belongs to the PRM1 family.</text>
</comment>
<protein>
    <recommendedName>
        <fullName>Plasma membrane fusion protein PRM1</fullName>
    </recommendedName>
</protein>
<evidence type="ECO:0000250" key="1"/>
<evidence type="ECO:0000255" key="2"/>
<evidence type="ECO:0000256" key="3">
    <source>
        <dbReference type="SAM" id="MobiDB-lite"/>
    </source>
</evidence>
<evidence type="ECO:0000305" key="4"/>
<dbReference type="EMBL" id="CM003147">
    <property type="protein sequence ID" value="KIS68751.1"/>
    <property type="molecule type" value="Genomic_DNA"/>
</dbReference>
<dbReference type="RefSeq" id="XP_011389721.1">
    <property type="nucleotide sequence ID" value="XM_011391419.1"/>
</dbReference>
<dbReference type="FunCoup" id="Q4P996">
    <property type="interactions" value="3"/>
</dbReference>
<dbReference type="STRING" id="237631.Q4P996"/>
<dbReference type="GlyCosmos" id="Q4P996">
    <property type="glycosylation" value="9 sites, No reported glycans"/>
</dbReference>
<dbReference type="EnsemblFungi" id="KIS68751">
    <property type="protein sequence ID" value="KIS68751"/>
    <property type="gene ID" value="UMAG_03317"/>
</dbReference>
<dbReference type="GeneID" id="23563809"/>
<dbReference type="KEGG" id="uma:UMAG_03317"/>
<dbReference type="VEuPathDB" id="FungiDB:UMAG_03317"/>
<dbReference type="eggNOG" id="ENOG502QRP5">
    <property type="taxonomic scope" value="Eukaryota"/>
</dbReference>
<dbReference type="HOGENOM" id="CLU_010191_0_0_1"/>
<dbReference type="InParanoid" id="Q4P996"/>
<dbReference type="OMA" id="NVFGWVN"/>
<dbReference type="OrthoDB" id="10248838at2759"/>
<dbReference type="Proteomes" id="UP000000561">
    <property type="component" value="Chromosome 8"/>
</dbReference>
<dbReference type="GO" id="GO:0043332">
    <property type="term" value="C:mating projection tip"/>
    <property type="evidence" value="ECO:0000318"/>
    <property type="project" value="GO_Central"/>
</dbReference>
<dbReference type="GO" id="GO:0005886">
    <property type="term" value="C:plasma membrane"/>
    <property type="evidence" value="ECO:0007669"/>
    <property type="project" value="UniProtKB-SubCell"/>
</dbReference>
<dbReference type="GO" id="GO:0032220">
    <property type="term" value="P:plasma membrane fusion involved in cytogamy"/>
    <property type="evidence" value="ECO:0000318"/>
    <property type="project" value="GO_Central"/>
</dbReference>
<dbReference type="InterPro" id="IPR026777">
    <property type="entry name" value="PRM1"/>
</dbReference>
<dbReference type="PANTHER" id="PTHR31030">
    <property type="entry name" value="PLASMA MEMBRANE FUSION PROTEIN PRM1"/>
    <property type="match status" value="1"/>
</dbReference>
<dbReference type="PANTHER" id="PTHR31030:SF1">
    <property type="entry name" value="PLASMA MEMBRANE FUSION PROTEIN PRM1"/>
    <property type="match status" value="1"/>
</dbReference>
<sequence>MSFHPNAVDAPPSYLHQHQAGSPLYTQNTIRPNANSTDLNSPHKPPILQPWLGLQARLFLAPISIPLISLLFVAARMLSSSNEATDSISSAKGKLLSACSAAEGTASLAASFPHFLAASTNVQLALSVTATVHSAARVFDLSMTAIQKILTYIVNSYKSLFMCFMELLVRGALAVLITAVEFISQAITAATLGIRSAIQESITGVNTLLATAVGAINDVIGVFGQHVNPPHIAVPSLTSLENITLPHEIQDGLVKLNATLPTLQQLKQSMDALIETPFEEMKREVNATLASFQFNHSVFPVPEMQNVTFCDRIDTSPLDELGNALKNVARWGLVALLLIAIVVMLIGVAWEWWKWQKEVKAVERTRSLWLAQRSSAHSDGNDKFCDNILKTENLMSLLTISQHPLISFCSLNYCKRLGIRTRRAQDRCAWLLSFLMHPASLACLFTGVLGLISVLMQAILVHSLSHHYVSSIDTSLAHLSSDIVNLVHDHTRNASVAFSTSANTVILQVEAELNDHVFRWVDTTTSTMNSTLNQFVDGLTETLTSTFGGTPFNAPLQTFVQCILGQKVQGIEKALTWIHENAYVNFSVVPADVLMLRPEQQEAVLRPVREAMLGSRDDQGGGNGVVGHVISRYMEHLHQEKILFTALIGVYAIILLIGLLAVLYATLAERRMHDDDETRKKVSRDESEEKLRSDLQAGPGGAGIARLWSRRPKLNAGCFRAFSHPPVPVSAQNPSSKIDHAARFPSSAHSSRPDPIHVTKDSISYPFQMHHSLNTSPSTRPTQPTPLQQTSNPDRDTVQSLHHASTTHNQTASTRTKEYDSWLCFLASYHDGEATVPAKAPEAVEGAQDRFHRLFGCSLRASPTVATFNHHVSAPAVSSDRAEIEVEDARFRETLDLGSMQDWIGSKSPIPPPAGRGGSHSPRNTADQLPEVQLTRSGGCVGPHSSDSTQETYAFTDSVRLPPGPQPQQKRVVSSQSISFFAW</sequence>
<feature type="chain" id="PRO_0000337291" description="Plasma membrane fusion protein PRM1">
    <location>
        <begin position="1"/>
        <end position="983"/>
    </location>
</feature>
<feature type="topological domain" description="Extracellular" evidence="1">
    <location>
        <begin position="1"/>
        <end position="57"/>
    </location>
</feature>
<feature type="transmembrane region" description="Helical" evidence="2">
    <location>
        <begin position="58"/>
        <end position="78"/>
    </location>
</feature>
<feature type="topological domain" description="Cytoplasmic" evidence="1">
    <location>
        <begin position="79"/>
        <end position="159"/>
    </location>
</feature>
<feature type="transmembrane region" description="Helical" evidence="2">
    <location>
        <begin position="160"/>
        <end position="180"/>
    </location>
</feature>
<feature type="topological domain" description="Extracellular" evidence="1">
    <location>
        <begin position="181"/>
        <end position="332"/>
    </location>
</feature>
<feature type="transmembrane region" description="Helical" evidence="2">
    <location>
        <begin position="333"/>
        <end position="353"/>
    </location>
</feature>
<feature type="topological domain" description="Cytoplasmic" evidence="1">
    <location>
        <begin position="354"/>
        <end position="440"/>
    </location>
</feature>
<feature type="transmembrane region" description="Helical" evidence="2">
    <location>
        <begin position="441"/>
        <end position="461"/>
    </location>
</feature>
<feature type="topological domain" description="Extracellular" evidence="1">
    <location>
        <begin position="462"/>
        <end position="641"/>
    </location>
</feature>
<feature type="transmembrane region" description="Helical" evidence="2">
    <location>
        <begin position="642"/>
        <end position="662"/>
    </location>
</feature>
<feature type="topological domain" description="Cytoplasmic" evidence="1">
    <location>
        <begin position="663"/>
        <end position="983"/>
    </location>
</feature>
<feature type="region of interest" description="Disordered" evidence="3">
    <location>
        <begin position="674"/>
        <end position="704"/>
    </location>
</feature>
<feature type="region of interest" description="Disordered" evidence="3">
    <location>
        <begin position="729"/>
        <end position="813"/>
    </location>
</feature>
<feature type="region of interest" description="Disordered" evidence="3">
    <location>
        <begin position="902"/>
        <end position="976"/>
    </location>
</feature>
<feature type="compositionally biased region" description="Basic and acidic residues" evidence="3">
    <location>
        <begin position="674"/>
        <end position="693"/>
    </location>
</feature>
<feature type="compositionally biased region" description="Basic and acidic residues" evidence="3">
    <location>
        <begin position="751"/>
        <end position="760"/>
    </location>
</feature>
<feature type="compositionally biased region" description="Low complexity" evidence="3">
    <location>
        <begin position="775"/>
        <end position="792"/>
    </location>
</feature>
<feature type="compositionally biased region" description="Polar residues" evidence="3">
    <location>
        <begin position="798"/>
        <end position="813"/>
    </location>
</feature>
<feature type="compositionally biased region" description="Polar residues" evidence="3">
    <location>
        <begin position="945"/>
        <end position="955"/>
    </location>
</feature>
<feature type="compositionally biased region" description="Polar residues" evidence="3">
    <location>
        <begin position="967"/>
        <end position="976"/>
    </location>
</feature>
<feature type="glycosylation site" description="N-linked (GlcNAc...) asparagine" evidence="2">
    <location>
        <position position="35"/>
    </location>
</feature>
<feature type="glycosylation site" description="N-linked (GlcNAc...) asparagine" evidence="2">
    <location>
        <position position="242"/>
    </location>
</feature>
<feature type="glycosylation site" description="N-linked (GlcNAc...) asparagine" evidence="2">
    <location>
        <position position="257"/>
    </location>
</feature>
<feature type="glycosylation site" description="N-linked (GlcNAc...) asparagine" evidence="2">
    <location>
        <position position="286"/>
    </location>
</feature>
<feature type="glycosylation site" description="N-linked (GlcNAc...) asparagine" evidence="2">
    <location>
        <position position="295"/>
    </location>
</feature>
<feature type="glycosylation site" description="N-linked (GlcNAc...) asparagine" evidence="2">
    <location>
        <position position="306"/>
    </location>
</feature>
<feature type="glycosylation site" description="N-linked (GlcNAc...) asparagine" evidence="2">
    <location>
        <position position="493"/>
    </location>
</feature>
<feature type="glycosylation site" description="N-linked (GlcNAc...) asparagine" evidence="2">
    <location>
        <position position="529"/>
    </location>
</feature>
<feature type="glycosylation site" description="N-linked (GlcNAc...) asparagine" evidence="2">
    <location>
        <position position="585"/>
    </location>
</feature>
<proteinExistence type="inferred from homology"/>
<reference key="1">
    <citation type="journal article" date="2006" name="Nature">
        <title>Insights from the genome of the biotrophic fungal plant pathogen Ustilago maydis.</title>
        <authorList>
            <person name="Kaemper J."/>
            <person name="Kahmann R."/>
            <person name="Boelker M."/>
            <person name="Ma L.-J."/>
            <person name="Brefort T."/>
            <person name="Saville B.J."/>
            <person name="Banuett F."/>
            <person name="Kronstad J.W."/>
            <person name="Gold S.E."/>
            <person name="Mueller O."/>
            <person name="Perlin M.H."/>
            <person name="Woesten H.A.B."/>
            <person name="de Vries R."/>
            <person name="Ruiz-Herrera J."/>
            <person name="Reynaga-Pena C.G."/>
            <person name="Snetselaar K."/>
            <person name="McCann M."/>
            <person name="Perez-Martin J."/>
            <person name="Feldbruegge M."/>
            <person name="Basse C.W."/>
            <person name="Steinberg G."/>
            <person name="Ibeas J.I."/>
            <person name="Holloman W."/>
            <person name="Guzman P."/>
            <person name="Farman M.L."/>
            <person name="Stajich J.E."/>
            <person name="Sentandreu R."/>
            <person name="Gonzalez-Prieto J.M."/>
            <person name="Kennell J.C."/>
            <person name="Molina L."/>
            <person name="Schirawski J."/>
            <person name="Mendoza-Mendoza A."/>
            <person name="Greilinger D."/>
            <person name="Muench K."/>
            <person name="Roessel N."/>
            <person name="Scherer M."/>
            <person name="Vranes M."/>
            <person name="Ladendorf O."/>
            <person name="Vincon V."/>
            <person name="Fuchs U."/>
            <person name="Sandrock B."/>
            <person name="Meng S."/>
            <person name="Ho E.C.H."/>
            <person name="Cahill M.J."/>
            <person name="Boyce K.J."/>
            <person name="Klose J."/>
            <person name="Klosterman S.J."/>
            <person name="Deelstra H.J."/>
            <person name="Ortiz-Castellanos L."/>
            <person name="Li W."/>
            <person name="Sanchez-Alonso P."/>
            <person name="Schreier P.H."/>
            <person name="Haeuser-Hahn I."/>
            <person name="Vaupel M."/>
            <person name="Koopmann E."/>
            <person name="Friedrich G."/>
            <person name="Voss H."/>
            <person name="Schlueter T."/>
            <person name="Margolis J."/>
            <person name="Platt D."/>
            <person name="Swimmer C."/>
            <person name="Gnirke A."/>
            <person name="Chen F."/>
            <person name="Vysotskaia V."/>
            <person name="Mannhaupt G."/>
            <person name="Gueldener U."/>
            <person name="Muensterkoetter M."/>
            <person name="Haase D."/>
            <person name="Oesterheld M."/>
            <person name="Mewes H.-W."/>
            <person name="Mauceli E.W."/>
            <person name="DeCaprio D."/>
            <person name="Wade C.M."/>
            <person name="Butler J."/>
            <person name="Young S.K."/>
            <person name="Jaffe D.B."/>
            <person name="Calvo S.E."/>
            <person name="Nusbaum C."/>
            <person name="Galagan J.E."/>
            <person name="Birren B.W."/>
        </authorList>
    </citation>
    <scope>NUCLEOTIDE SEQUENCE [LARGE SCALE GENOMIC DNA]</scope>
    <source>
        <strain>DSM 14603 / FGSC 9021 / UM521</strain>
    </source>
</reference>
<reference key="2">
    <citation type="submission" date="2014-09" db="EMBL/GenBank/DDBJ databases">
        <authorList>
            <person name="Gueldener U."/>
            <person name="Muensterkoetter M."/>
            <person name="Walter M.C."/>
            <person name="Mannhaupt G."/>
            <person name="Kahmann R."/>
        </authorList>
    </citation>
    <scope>GENOME REANNOTATION</scope>
    <source>
        <strain>DSM 14603 / FGSC 9021 / UM521</strain>
    </source>
</reference>
<name>PRM1_MYCMD</name>
<organism>
    <name type="scientific">Mycosarcoma maydis</name>
    <name type="common">Corn smut fungus</name>
    <name type="synonym">Ustilago maydis</name>
    <dbReference type="NCBI Taxonomy" id="5270"/>
    <lineage>
        <taxon>Eukaryota</taxon>
        <taxon>Fungi</taxon>
        <taxon>Dikarya</taxon>
        <taxon>Basidiomycota</taxon>
        <taxon>Ustilaginomycotina</taxon>
        <taxon>Ustilaginomycetes</taxon>
        <taxon>Ustilaginales</taxon>
        <taxon>Ustilaginaceae</taxon>
        <taxon>Mycosarcoma</taxon>
    </lineage>
</organism>
<keyword id="KW-1003">Cell membrane</keyword>
<keyword id="KW-0184">Conjugation</keyword>
<keyword id="KW-0325">Glycoprotein</keyword>
<keyword id="KW-0472">Membrane</keyword>
<keyword id="KW-1185">Reference proteome</keyword>
<keyword id="KW-0812">Transmembrane</keyword>
<keyword id="KW-1133">Transmembrane helix</keyword>